<evidence type="ECO:0000250" key="1"/>
<evidence type="ECO:0000250" key="2">
    <source>
        <dbReference type="UniProtKB" id="P27889"/>
    </source>
</evidence>
<evidence type="ECO:0000250" key="3">
    <source>
        <dbReference type="UniProtKB" id="P35680"/>
    </source>
</evidence>
<evidence type="ECO:0000255" key="4">
    <source>
        <dbReference type="PROSITE-ProRule" id="PRU00108"/>
    </source>
</evidence>
<evidence type="ECO:0000255" key="5">
    <source>
        <dbReference type="PROSITE-ProRule" id="PRU01285"/>
    </source>
</evidence>
<evidence type="ECO:0000255" key="6">
    <source>
        <dbReference type="PROSITE-ProRule" id="PRU01286"/>
    </source>
</evidence>
<evidence type="ECO:0000256" key="7">
    <source>
        <dbReference type="SAM" id="MobiDB-lite"/>
    </source>
</evidence>
<evidence type="ECO:0000269" key="8">
    <source>
    </source>
</evidence>
<evidence type="ECO:0000305" key="9"/>
<reference key="1">
    <citation type="journal article" date="1993" name="Nucleic Acids Res.">
        <title>Purification and cDNA cloning of a transcription factor which functionally cooperates within a cAMP regulatory unit in the porcine uPA gene.</title>
        <authorList>
            <person name="Menoud P.-A."/>
            <person name="Matthies R."/>
            <person name="Hofsteenge J."/>
            <person name="Nagamine Y."/>
        </authorList>
    </citation>
    <scope>NUCLEOTIDE SEQUENCE [MRNA]</scope>
    <scope>PARTIAL PROTEIN SEQUENCE</scope>
    <scope>FUNCTION</scope>
    <source>
        <tissue>Kidney</tissue>
    </source>
</reference>
<protein>
    <recommendedName>
        <fullName>Hepatocyte nuclear factor 1-beta</fullName>
        <shortName>HNF-1-beta</shortName>
        <shortName>HNF-1B</shortName>
    </recommendedName>
    <alternativeName>
        <fullName>FPC-binding protein</fullName>
        <shortName>FPCB</shortName>
    </alternativeName>
    <alternativeName>
        <fullName>Transcription factor 2</fullName>
        <shortName>TCF-2</shortName>
    </alternativeName>
</protein>
<gene>
    <name type="primary">HNF1B</name>
    <name type="synonym">TCF2</name>
</gene>
<comment type="function">
    <text evidence="3 8">Transcription factor that binds to the inverted palindrome 5'-GTTAATNATTAAC-3' (PubMed:8388098). Binds to the FPC element in the cAMP regulatory unit of the PLAU gene (PubMed:8388098). Transcriptional activity is increased by coactivator PCBD1 (By similarity).</text>
</comment>
<comment type="subunit">
    <text evidence="3">Binds DNA as a dimer. Can form homodimer or heterodimer with HNF1-alpha (By similarity). Interacts (via HNF-p1 domain) with PCBD1; the interaction increases its transactivation activity (By similarity).</text>
</comment>
<comment type="subcellular location">
    <subcellularLocation>
        <location>Nucleus</location>
    </subcellularLocation>
</comment>
<comment type="similarity">
    <text evidence="9">Belongs to the HNF1 homeobox family.</text>
</comment>
<name>HNF1B_PIG</name>
<feature type="chain" id="PRO_0000049123" description="Hepatocyte nuclear factor 1-beta">
    <location>
        <begin position="1"/>
        <end position="559"/>
    </location>
</feature>
<feature type="domain" description="HNF-p1" evidence="6">
    <location>
        <begin position="1"/>
        <end position="32"/>
    </location>
</feature>
<feature type="domain" description="POU-specific atypical" evidence="5">
    <location>
        <begin position="93"/>
        <end position="188"/>
    </location>
</feature>
<feature type="DNA-binding region" description="Homeobox; HNF1-type" evidence="4">
    <location>
        <begin position="231"/>
        <end position="312"/>
    </location>
</feature>
<feature type="region of interest" description="Dimerization" evidence="1">
    <location>
        <begin position="1"/>
        <end position="31"/>
    </location>
</feature>
<feature type="region of interest" description="Disordered" evidence="7">
    <location>
        <begin position="328"/>
        <end position="371"/>
    </location>
</feature>
<feature type="compositionally biased region" description="Low complexity" evidence="7">
    <location>
        <begin position="328"/>
        <end position="341"/>
    </location>
</feature>
<feature type="compositionally biased region" description="Polar residues" evidence="7">
    <location>
        <begin position="353"/>
        <end position="371"/>
    </location>
</feature>
<feature type="modified residue" description="Phosphoserine" evidence="2">
    <location>
        <position position="49"/>
    </location>
</feature>
<feature type="modified residue" description="Phosphoserine" evidence="2">
    <location>
        <position position="52"/>
    </location>
</feature>
<feature type="modified residue" description="Phosphoserine" evidence="2">
    <location>
        <position position="75"/>
    </location>
</feature>
<feature type="modified residue" description="Phosphoserine" evidence="2">
    <location>
        <position position="80"/>
    </location>
</feature>
<proteinExistence type="evidence at protein level"/>
<organism>
    <name type="scientific">Sus scrofa</name>
    <name type="common">Pig</name>
    <dbReference type="NCBI Taxonomy" id="9823"/>
    <lineage>
        <taxon>Eukaryota</taxon>
        <taxon>Metazoa</taxon>
        <taxon>Chordata</taxon>
        <taxon>Craniata</taxon>
        <taxon>Vertebrata</taxon>
        <taxon>Euteleostomi</taxon>
        <taxon>Mammalia</taxon>
        <taxon>Eutheria</taxon>
        <taxon>Laurasiatheria</taxon>
        <taxon>Artiodactyla</taxon>
        <taxon>Suina</taxon>
        <taxon>Suidae</taxon>
        <taxon>Sus</taxon>
    </lineage>
</organism>
<dbReference type="EMBL" id="X69675">
    <property type="protein sequence ID" value="CAA49356.1"/>
    <property type="molecule type" value="mRNA"/>
</dbReference>
<dbReference type="PIR" id="S33724">
    <property type="entry name" value="S33724"/>
</dbReference>
<dbReference type="RefSeq" id="NP_999121.1">
    <property type="nucleotide sequence ID" value="NM_213956.1"/>
</dbReference>
<dbReference type="BMRB" id="Q03365"/>
<dbReference type="SMR" id="Q03365"/>
<dbReference type="FunCoup" id="Q03365">
    <property type="interactions" value="92"/>
</dbReference>
<dbReference type="STRING" id="9823.ENSSSCP00000069206"/>
<dbReference type="PaxDb" id="9823-ENSSSCP00000028034"/>
<dbReference type="GeneID" id="397002"/>
<dbReference type="KEGG" id="ssc:397002"/>
<dbReference type="CTD" id="6928"/>
<dbReference type="eggNOG" id="ENOG502QRPW">
    <property type="taxonomic scope" value="Eukaryota"/>
</dbReference>
<dbReference type="InParanoid" id="Q03365"/>
<dbReference type="OrthoDB" id="10069265at2759"/>
<dbReference type="Proteomes" id="UP000008227">
    <property type="component" value="Unplaced"/>
</dbReference>
<dbReference type="Proteomes" id="UP000314985">
    <property type="component" value="Unplaced"/>
</dbReference>
<dbReference type="Proteomes" id="UP000694570">
    <property type="component" value="Unplaced"/>
</dbReference>
<dbReference type="Proteomes" id="UP000694571">
    <property type="component" value="Unplaced"/>
</dbReference>
<dbReference type="Proteomes" id="UP000694720">
    <property type="component" value="Unplaced"/>
</dbReference>
<dbReference type="Proteomes" id="UP000694722">
    <property type="component" value="Unplaced"/>
</dbReference>
<dbReference type="Proteomes" id="UP000694723">
    <property type="component" value="Unplaced"/>
</dbReference>
<dbReference type="Proteomes" id="UP000694724">
    <property type="component" value="Unplaced"/>
</dbReference>
<dbReference type="Proteomes" id="UP000694725">
    <property type="component" value="Unplaced"/>
</dbReference>
<dbReference type="Proteomes" id="UP000694726">
    <property type="component" value="Unplaced"/>
</dbReference>
<dbReference type="Proteomes" id="UP000694727">
    <property type="component" value="Unplaced"/>
</dbReference>
<dbReference type="Proteomes" id="UP000694728">
    <property type="component" value="Unplaced"/>
</dbReference>
<dbReference type="GO" id="GO:0005634">
    <property type="term" value="C:nucleus"/>
    <property type="evidence" value="ECO:0000250"/>
    <property type="project" value="UniProtKB"/>
</dbReference>
<dbReference type="GO" id="GO:0003700">
    <property type="term" value="F:DNA-binding transcription factor activity"/>
    <property type="evidence" value="ECO:0000250"/>
    <property type="project" value="UniProtKB"/>
</dbReference>
<dbReference type="GO" id="GO:0000981">
    <property type="term" value="F:DNA-binding transcription factor activity, RNA polymerase II-specific"/>
    <property type="evidence" value="ECO:0000318"/>
    <property type="project" value="GO_Central"/>
</dbReference>
<dbReference type="GO" id="GO:0042803">
    <property type="term" value="F:protein homodimerization activity"/>
    <property type="evidence" value="ECO:0000250"/>
    <property type="project" value="UniProtKB"/>
</dbReference>
<dbReference type="GO" id="GO:0000978">
    <property type="term" value="F:RNA polymerase II cis-regulatory region sequence-specific DNA binding"/>
    <property type="evidence" value="ECO:0000318"/>
    <property type="project" value="GO_Central"/>
</dbReference>
<dbReference type="GO" id="GO:0031018">
    <property type="term" value="P:endocrine pancreas development"/>
    <property type="evidence" value="ECO:0000250"/>
    <property type="project" value="UniProtKB"/>
</dbReference>
<dbReference type="GO" id="GO:0048806">
    <property type="term" value="P:genitalia development"/>
    <property type="evidence" value="ECO:0000250"/>
    <property type="project" value="UniProtKB"/>
</dbReference>
<dbReference type="GO" id="GO:0030073">
    <property type="term" value="P:insulin secretion"/>
    <property type="evidence" value="ECO:0007669"/>
    <property type="project" value="InterPro"/>
</dbReference>
<dbReference type="GO" id="GO:0001822">
    <property type="term" value="P:kidney development"/>
    <property type="evidence" value="ECO:0000250"/>
    <property type="project" value="UniProtKB"/>
</dbReference>
<dbReference type="GO" id="GO:0001889">
    <property type="term" value="P:liver development"/>
    <property type="evidence" value="ECO:0007669"/>
    <property type="project" value="InterPro"/>
</dbReference>
<dbReference type="GO" id="GO:0045893">
    <property type="term" value="P:positive regulation of DNA-templated transcription"/>
    <property type="evidence" value="ECO:0000250"/>
    <property type="project" value="UniProtKB"/>
</dbReference>
<dbReference type="GO" id="GO:0006357">
    <property type="term" value="P:regulation of transcription by RNA polymerase II"/>
    <property type="evidence" value="ECO:0000318"/>
    <property type="project" value="GO_Central"/>
</dbReference>
<dbReference type="CDD" id="cd00086">
    <property type="entry name" value="homeodomain"/>
    <property type="match status" value="1"/>
</dbReference>
<dbReference type="FunFam" id="1.10.10.60:FF:000043">
    <property type="entry name" value="Hepatocyte nuclear factor 1-beta"/>
    <property type="match status" value="1"/>
</dbReference>
<dbReference type="FunFam" id="1.10.260.40:FF:000009">
    <property type="entry name" value="Hepatocyte nuclear factor 1-beta"/>
    <property type="match status" value="1"/>
</dbReference>
<dbReference type="Gene3D" id="1.10.10.60">
    <property type="entry name" value="Homeodomain-like"/>
    <property type="match status" value="1"/>
</dbReference>
<dbReference type="Gene3D" id="1.10.260.40">
    <property type="entry name" value="lambda repressor-like DNA-binding domains"/>
    <property type="match status" value="1"/>
</dbReference>
<dbReference type="InterPro" id="IPR001356">
    <property type="entry name" value="HD"/>
</dbReference>
<dbReference type="InterPro" id="IPR039066">
    <property type="entry name" value="HNF-1"/>
</dbReference>
<dbReference type="InterPro" id="IPR006899">
    <property type="entry name" value="HNF-1_N"/>
</dbReference>
<dbReference type="InterPro" id="IPR044869">
    <property type="entry name" value="HNF-1_POU"/>
</dbReference>
<dbReference type="InterPro" id="IPR023219">
    <property type="entry name" value="HNF1_dimer_N_dom_sf"/>
</dbReference>
<dbReference type="InterPro" id="IPR006897">
    <property type="entry name" value="HNF1b_C"/>
</dbReference>
<dbReference type="InterPro" id="IPR044866">
    <property type="entry name" value="HNF_P1"/>
</dbReference>
<dbReference type="InterPro" id="IPR009057">
    <property type="entry name" value="Homeodomain-like_sf"/>
</dbReference>
<dbReference type="InterPro" id="IPR010982">
    <property type="entry name" value="Lambda_DNA-bd_dom_sf"/>
</dbReference>
<dbReference type="PANTHER" id="PTHR11568">
    <property type="entry name" value="HEPATOCYTE NUCLEAR FACTOR 1"/>
    <property type="match status" value="1"/>
</dbReference>
<dbReference type="PANTHER" id="PTHR11568:SF2">
    <property type="entry name" value="HEPATOCYTE NUCLEAR FACTOR 1-BETA"/>
    <property type="match status" value="1"/>
</dbReference>
<dbReference type="Pfam" id="PF04814">
    <property type="entry name" value="HNF-1_N"/>
    <property type="match status" value="1"/>
</dbReference>
<dbReference type="Pfam" id="PF04812">
    <property type="entry name" value="HNF-1B_C"/>
    <property type="match status" value="1"/>
</dbReference>
<dbReference type="SMART" id="SM00389">
    <property type="entry name" value="HOX"/>
    <property type="match status" value="1"/>
</dbReference>
<dbReference type="SUPFAM" id="SSF100957">
    <property type="entry name" value="Dimerization cofactor of HNF-1 alpha"/>
    <property type="match status" value="1"/>
</dbReference>
<dbReference type="SUPFAM" id="SSF46689">
    <property type="entry name" value="Homeodomain-like"/>
    <property type="match status" value="1"/>
</dbReference>
<dbReference type="SUPFAM" id="SSF47413">
    <property type="entry name" value="lambda repressor-like DNA-binding domains"/>
    <property type="match status" value="1"/>
</dbReference>
<dbReference type="PROSITE" id="PS51937">
    <property type="entry name" value="HNF_P1"/>
    <property type="match status" value="1"/>
</dbReference>
<dbReference type="PROSITE" id="PS50071">
    <property type="entry name" value="HOMEOBOX_2"/>
    <property type="match status" value="1"/>
</dbReference>
<dbReference type="PROSITE" id="PS51936">
    <property type="entry name" value="POU_4"/>
    <property type="match status" value="1"/>
</dbReference>
<accession>Q03365</accession>
<sequence length="559" mass="61528">MVSKLTSLQQELLSALLSSGVTKEVLVQALEELLPSPSFGVKLETLPLSPGSGTEPDTKPVFHTLTNGHAKGRLSGDEGSEDGDDYDTPPILKELQALNTEEAADDGAEVDRMLSEDPWRAAKMIKGYMQQHNIPQREVVDVTGLNQSHLSQHLNKGTPMKTQKRAALYTWYVRKQREILRQFNQTVQSSGNLTDKSSQDQLLFLFPEFSQQSQGPGQSDDACSEPTNKKMRRNRFKWGPASQQILYQAYDRQKNPSKEEREALVEECNRAECLQRGVSPSKAHGLGSNLVTEVRVYNWFANRRKEEEAFRQKLAMDAYSSNQTHSLNTLLSHSSPHHQPSTSPPNKLPGVRYNQQGNNEVTSSSTISHHGNSAMVTSQSVLQQVSPASLDPGHNLLSPDGKMQISVSGGGLPPVSTLTNIHSLSHHNPQQSQNLIMTPLSGVMAIAQSLNSSQAQSVPVINSVAGSLAALQPVQFSQQLHSPHQQPLMQQSPGSHMAQQPFMAAVTQLQNSHMYTHKQEPPQYSHTSRFPPAMVVTDTSSISTLTNMSSSKQCPLQAW</sequence>
<keyword id="KW-0010">Activator</keyword>
<keyword id="KW-0903">Direct protein sequencing</keyword>
<keyword id="KW-0238">DNA-binding</keyword>
<keyword id="KW-0371">Homeobox</keyword>
<keyword id="KW-0539">Nucleus</keyword>
<keyword id="KW-0597">Phosphoprotein</keyword>
<keyword id="KW-1185">Reference proteome</keyword>
<keyword id="KW-0804">Transcription</keyword>
<keyword id="KW-0805">Transcription regulation</keyword>